<comment type="function">
    <text evidence="1">Endonuclease that specifically degrades the RNA of RNA-DNA hybrids.</text>
</comment>
<comment type="catalytic activity">
    <reaction evidence="1">
        <text>Endonucleolytic cleavage to 5'-phosphomonoester.</text>
        <dbReference type="EC" id="3.1.26.4"/>
    </reaction>
</comment>
<comment type="cofactor">
    <cofactor evidence="1">
        <name>Mn(2+)</name>
        <dbReference type="ChEBI" id="CHEBI:29035"/>
    </cofactor>
    <cofactor evidence="1">
        <name>Mg(2+)</name>
        <dbReference type="ChEBI" id="CHEBI:18420"/>
    </cofactor>
    <text evidence="1">Manganese or magnesium. Binds 1 divalent metal ion per monomer in the absence of substrate. May bind a second metal ion after substrate binding.</text>
</comment>
<comment type="subcellular location">
    <subcellularLocation>
        <location evidence="1">Cytoplasm</location>
    </subcellularLocation>
</comment>
<comment type="similarity">
    <text evidence="1">Belongs to the RNase HII family. RnhC subfamily.</text>
</comment>
<evidence type="ECO:0000255" key="1">
    <source>
        <dbReference type="HAMAP-Rule" id="MF_00053"/>
    </source>
</evidence>
<evidence type="ECO:0000255" key="2">
    <source>
        <dbReference type="PROSITE-ProRule" id="PRU01319"/>
    </source>
</evidence>
<organism>
    <name type="scientific">Bacillus thuringiensis subsp. konkukian (strain 97-27)</name>
    <dbReference type="NCBI Taxonomy" id="281309"/>
    <lineage>
        <taxon>Bacteria</taxon>
        <taxon>Bacillati</taxon>
        <taxon>Bacillota</taxon>
        <taxon>Bacilli</taxon>
        <taxon>Bacillales</taxon>
        <taxon>Bacillaceae</taxon>
        <taxon>Bacillus</taxon>
        <taxon>Bacillus cereus group</taxon>
    </lineage>
</organism>
<gene>
    <name evidence="1" type="primary">rnhC</name>
    <name type="ordered locus">BT9727_4289</name>
</gene>
<protein>
    <recommendedName>
        <fullName evidence="1">Ribonuclease HIII</fullName>
        <shortName evidence="1">RNase HIII</shortName>
        <ecNumber evidence="1">3.1.26.4</ecNumber>
    </recommendedName>
</protein>
<keyword id="KW-0963">Cytoplasm</keyword>
<keyword id="KW-0255">Endonuclease</keyword>
<keyword id="KW-0378">Hydrolase</keyword>
<keyword id="KW-0460">Magnesium</keyword>
<keyword id="KW-0479">Metal-binding</keyword>
<keyword id="KW-0540">Nuclease</keyword>
<feature type="chain" id="PRO_0000111678" description="Ribonuclease HIII">
    <location>
        <begin position="1"/>
        <end position="311"/>
    </location>
</feature>
<feature type="domain" description="RNase H type-2" evidence="2">
    <location>
        <begin position="95"/>
        <end position="311"/>
    </location>
</feature>
<feature type="binding site" evidence="1">
    <location>
        <position position="101"/>
    </location>
    <ligand>
        <name>a divalent metal cation</name>
        <dbReference type="ChEBI" id="CHEBI:60240"/>
    </ligand>
</feature>
<feature type="binding site" evidence="1">
    <location>
        <position position="102"/>
    </location>
    <ligand>
        <name>a divalent metal cation</name>
        <dbReference type="ChEBI" id="CHEBI:60240"/>
    </ligand>
</feature>
<feature type="binding site" evidence="1">
    <location>
        <position position="206"/>
    </location>
    <ligand>
        <name>a divalent metal cation</name>
        <dbReference type="ChEBI" id="CHEBI:60240"/>
    </ligand>
</feature>
<name>RNH3_BACHK</name>
<accession>Q6HCX2</accession>
<proteinExistence type="inferred from homology"/>
<dbReference type="EC" id="3.1.26.4" evidence="1"/>
<dbReference type="EMBL" id="AE017355">
    <property type="protein sequence ID" value="AAT60880.1"/>
    <property type="molecule type" value="Genomic_DNA"/>
</dbReference>
<dbReference type="RefSeq" id="WP_000071586.1">
    <property type="nucleotide sequence ID" value="NC_005957.1"/>
</dbReference>
<dbReference type="RefSeq" id="YP_038604.1">
    <property type="nucleotide sequence ID" value="NC_005957.1"/>
</dbReference>
<dbReference type="SMR" id="Q6HCX2"/>
<dbReference type="KEGG" id="btk:BT9727_4289"/>
<dbReference type="PATRIC" id="fig|281309.8.peg.4571"/>
<dbReference type="HOGENOM" id="CLU_059546_1_0_9"/>
<dbReference type="Proteomes" id="UP000001301">
    <property type="component" value="Chromosome"/>
</dbReference>
<dbReference type="GO" id="GO:0005737">
    <property type="term" value="C:cytoplasm"/>
    <property type="evidence" value="ECO:0007669"/>
    <property type="project" value="UniProtKB-SubCell"/>
</dbReference>
<dbReference type="GO" id="GO:0032299">
    <property type="term" value="C:ribonuclease H2 complex"/>
    <property type="evidence" value="ECO:0007669"/>
    <property type="project" value="TreeGrafter"/>
</dbReference>
<dbReference type="GO" id="GO:0000287">
    <property type="term" value="F:magnesium ion binding"/>
    <property type="evidence" value="ECO:0007669"/>
    <property type="project" value="UniProtKB-UniRule"/>
</dbReference>
<dbReference type="GO" id="GO:0003723">
    <property type="term" value="F:RNA binding"/>
    <property type="evidence" value="ECO:0007669"/>
    <property type="project" value="InterPro"/>
</dbReference>
<dbReference type="GO" id="GO:0004523">
    <property type="term" value="F:RNA-DNA hybrid ribonuclease activity"/>
    <property type="evidence" value="ECO:0007669"/>
    <property type="project" value="UniProtKB-UniRule"/>
</dbReference>
<dbReference type="GO" id="GO:0043137">
    <property type="term" value="P:DNA replication, removal of RNA primer"/>
    <property type="evidence" value="ECO:0007669"/>
    <property type="project" value="TreeGrafter"/>
</dbReference>
<dbReference type="GO" id="GO:0006298">
    <property type="term" value="P:mismatch repair"/>
    <property type="evidence" value="ECO:0007669"/>
    <property type="project" value="TreeGrafter"/>
</dbReference>
<dbReference type="CDD" id="cd06590">
    <property type="entry name" value="RNase_HII_bacteria_HIII_like"/>
    <property type="match status" value="1"/>
</dbReference>
<dbReference type="CDD" id="cd14796">
    <property type="entry name" value="RNAse_HIII_N"/>
    <property type="match status" value="1"/>
</dbReference>
<dbReference type="FunFam" id="3.30.310.10:FF:000016">
    <property type="entry name" value="Ribonuclease HIII"/>
    <property type="match status" value="1"/>
</dbReference>
<dbReference type="FunFam" id="3.30.420.10:FF:000047">
    <property type="entry name" value="Ribonuclease HIII"/>
    <property type="match status" value="1"/>
</dbReference>
<dbReference type="Gene3D" id="3.30.420.10">
    <property type="entry name" value="Ribonuclease H-like superfamily/Ribonuclease H"/>
    <property type="match status" value="1"/>
</dbReference>
<dbReference type="Gene3D" id="3.30.310.10">
    <property type="entry name" value="TATA-Binding Protein"/>
    <property type="match status" value="1"/>
</dbReference>
<dbReference type="HAMAP" id="MF_00053">
    <property type="entry name" value="RNase_HIII"/>
    <property type="match status" value="1"/>
</dbReference>
<dbReference type="InterPro" id="IPR001352">
    <property type="entry name" value="RNase_HII/HIII"/>
</dbReference>
<dbReference type="InterPro" id="IPR024567">
    <property type="entry name" value="RNase_HII/HIII_dom"/>
</dbReference>
<dbReference type="InterPro" id="IPR004641">
    <property type="entry name" value="RNase_HIII"/>
</dbReference>
<dbReference type="InterPro" id="IPR024568">
    <property type="entry name" value="RNase_HIII_N"/>
</dbReference>
<dbReference type="InterPro" id="IPR012337">
    <property type="entry name" value="RNaseH-like_sf"/>
</dbReference>
<dbReference type="InterPro" id="IPR036397">
    <property type="entry name" value="RNaseH_sf"/>
</dbReference>
<dbReference type="InterPro" id="IPR012295">
    <property type="entry name" value="TBP_dom_sf"/>
</dbReference>
<dbReference type="NCBIfam" id="TIGR00716">
    <property type="entry name" value="rnhC"/>
    <property type="match status" value="1"/>
</dbReference>
<dbReference type="PANTHER" id="PTHR10954:SF23">
    <property type="entry name" value="RIBONUCLEASE"/>
    <property type="match status" value="1"/>
</dbReference>
<dbReference type="PANTHER" id="PTHR10954">
    <property type="entry name" value="RIBONUCLEASE H2 SUBUNIT A"/>
    <property type="match status" value="1"/>
</dbReference>
<dbReference type="Pfam" id="PF11858">
    <property type="entry name" value="DUF3378"/>
    <property type="match status" value="1"/>
</dbReference>
<dbReference type="Pfam" id="PF01351">
    <property type="entry name" value="RNase_HII"/>
    <property type="match status" value="1"/>
</dbReference>
<dbReference type="PIRSF" id="PIRSF037748">
    <property type="entry name" value="RnhC"/>
    <property type="match status" value="1"/>
</dbReference>
<dbReference type="SUPFAM" id="SSF53098">
    <property type="entry name" value="Ribonuclease H-like"/>
    <property type="match status" value="1"/>
</dbReference>
<dbReference type="PROSITE" id="PS51975">
    <property type="entry name" value="RNASE_H_2"/>
    <property type="match status" value="1"/>
</dbReference>
<sequence length="311" mass="34255">MSNSIVIQTNSTVIEDMKQQYKHSLSPKTPQGGIFMAKVPSCTITAYKSGKVMFQGGRAEAEAARWQTVSQTPKTAVKKSVDSHRYAPPASIGTMSIVGSDEVGTGDFFGPMTVVAVYVDAKQIPLLKELGVKDSKNLNDEQITAIAKQLLHVVPYSSLVLHNEKYNELFDKGNNQGKLKALLHNKAITNLLTKIAPTKPEGVLIDQFTQPDTYYKYLAKQKQVQRENVYFATKGESVHLAVAAASILARYSFVKQFNELSKKAGMPLPKGAGKQVDIAAAKLIQKLGKERLPEFVKLHFANTEKAFRLLK</sequence>
<reference key="1">
    <citation type="journal article" date="2006" name="J. Bacteriol.">
        <title>Pathogenomic sequence analysis of Bacillus cereus and Bacillus thuringiensis isolates closely related to Bacillus anthracis.</title>
        <authorList>
            <person name="Han C.S."/>
            <person name="Xie G."/>
            <person name="Challacombe J.F."/>
            <person name="Altherr M.R."/>
            <person name="Bhotika S.S."/>
            <person name="Bruce D."/>
            <person name="Campbell C.S."/>
            <person name="Campbell M.L."/>
            <person name="Chen J."/>
            <person name="Chertkov O."/>
            <person name="Cleland C."/>
            <person name="Dimitrijevic M."/>
            <person name="Doggett N.A."/>
            <person name="Fawcett J.J."/>
            <person name="Glavina T."/>
            <person name="Goodwin L.A."/>
            <person name="Hill K.K."/>
            <person name="Hitchcock P."/>
            <person name="Jackson P.J."/>
            <person name="Keim P."/>
            <person name="Kewalramani A.R."/>
            <person name="Longmire J."/>
            <person name="Lucas S."/>
            <person name="Malfatti S."/>
            <person name="McMurry K."/>
            <person name="Meincke L.J."/>
            <person name="Misra M."/>
            <person name="Moseman B.L."/>
            <person name="Mundt M."/>
            <person name="Munk A.C."/>
            <person name="Okinaka R.T."/>
            <person name="Parson-Quintana B."/>
            <person name="Reilly L.P."/>
            <person name="Richardson P."/>
            <person name="Robinson D.L."/>
            <person name="Rubin E."/>
            <person name="Saunders E."/>
            <person name="Tapia R."/>
            <person name="Tesmer J.G."/>
            <person name="Thayer N."/>
            <person name="Thompson L.S."/>
            <person name="Tice H."/>
            <person name="Ticknor L.O."/>
            <person name="Wills P.L."/>
            <person name="Brettin T.S."/>
            <person name="Gilna P."/>
        </authorList>
    </citation>
    <scope>NUCLEOTIDE SEQUENCE [LARGE SCALE GENOMIC DNA]</scope>
    <source>
        <strain>97-27</strain>
    </source>
</reference>